<comment type="function">
    <text evidence="1">F(1)F(0) ATP synthase produces ATP from ADP in the presence of a proton or sodium gradient. F-type ATPases consist of two structural domains, F(1) containing the extramembraneous catalytic core and F(0) containing the membrane proton channel, linked together by a central stalk and a peripheral stalk. During catalysis, ATP synthesis in the catalytic domain of F(1) is coupled via a rotary mechanism of the central stalk subunits to proton translocation.</text>
</comment>
<comment type="function">
    <text evidence="1">This protein is part of the stalk that links CF(0) to CF(1). It either transmits conformational changes from CF(0) to CF(1) or is implicated in proton conduction.</text>
</comment>
<comment type="subunit">
    <text evidence="1">F-type ATPases have 2 components, F(1) - the catalytic core - and F(0) - the membrane proton channel. F(1) has five subunits: alpha(3), beta(3), gamma(1), delta(1), epsilon(1). CF(0) has four main subunits: a(1), b(1), b'(1) and c(10-14). The alpha and beta chains form an alternating ring which encloses part of the gamma chain. F(1) is attached to F(0) by a central stalk formed by the gamma and epsilon chains, while a peripheral stalk is formed by the delta, b and b' chains.</text>
</comment>
<comment type="subcellular location">
    <subcellularLocation>
        <location evidence="1">Cell inner membrane</location>
        <topology evidence="1">Peripheral membrane protein</topology>
    </subcellularLocation>
</comment>
<comment type="similarity">
    <text evidence="1">Belongs to the ATPase delta chain family.</text>
</comment>
<sequence length="185" mass="21019">MQQGKDSEQIAQRYAEALKELALSETGLLEQFGNDTDGMLQVMEESPDFERFLVVPIIAMADKKRLLVEAFGGKVHPYMLNFLQLMVDRRRIALLRPVCTSYQRILRELQQTTLAEVISAVPLSEEQASALIERIRRRTAAVRVELRRRVDPELLGGMIIKIGDEVIDASLRGQLRKLTLQLTLS</sequence>
<name>ATPD_GLOVI</name>
<accession>Q7NCS2</accession>
<organism>
    <name type="scientific">Gloeobacter violaceus (strain ATCC 29082 / PCC 7421)</name>
    <dbReference type="NCBI Taxonomy" id="251221"/>
    <lineage>
        <taxon>Bacteria</taxon>
        <taxon>Bacillati</taxon>
        <taxon>Cyanobacteriota</taxon>
        <taxon>Cyanophyceae</taxon>
        <taxon>Gloeobacterales</taxon>
        <taxon>Gloeobacteraceae</taxon>
        <taxon>Gloeobacter</taxon>
    </lineage>
</organism>
<proteinExistence type="inferred from homology"/>
<gene>
    <name evidence="1" type="primary">atpH</name>
    <name evidence="1" type="synonym">atpD</name>
    <name type="ordered locus">gll2906</name>
</gene>
<keyword id="KW-0066">ATP synthesis</keyword>
<keyword id="KW-0997">Cell inner membrane</keyword>
<keyword id="KW-1003">Cell membrane</keyword>
<keyword id="KW-0139">CF(1)</keyword>
<keyword id="KW-0375">Hydrogen ion transport</keyword>
<keyword id="KW-0406">Ion transport</keyword>
<keyword id="KW-0472">Membrane</keyword>
<keyword id="KW-1185">Reference proteome</keyword>
<keyword id="KW-0813">Transport</keyword>
<reference key="1">
    <citation type="journal article" date="2003" name="DNA Res.">
        <title>Complete genome structure of Gloeobacter violaceus PCC 7421, a cyanobacterium that lacks thylakoids.</title>
        <authorList>
            <person name="Nakamura Y."/>
            <person name="Kaneko T."/>
            <person name="Sato S."/>
            <person name="Mimuro M."/>
            <person name="Miyashita H."/>
            <person name="Tsuchiya T."/>
            <person name="Sasamoto S."/>
            <person name="Watanabe A."/>
            <person name="Kawashima K."/>
            <person name="Kishida Y."/>
            <person name="Kiyokawa C."/>
            <person name="Kohara M."/>
            <person name="Matsumoto M."/>
            <person name="Matsuno A."/>
            <person name="Nakazaki N."/>
            <person name="Shimpo S."/>
            <person name="Takeuchi C."/>
            <person name="Yamada M."/>
            <person name="Tabata S."/>
        </authorList>
    </citation>
    <scope>NUCLEOTIDE SEQUENCE [LARGE SCALE GENOMIC DNA]</scope>
    <source>
        <strain>ATCC 29082 / PCC 7421</strain>
    </source>
</reference>
<evidence type="ECO:0000255" key="1">
    <source>
        <dbReference type="HAMAP-Rule" id="MF_01416"/>
    </source>
</evidence>
<protein>
    <recommendedName>
        <fullName evidence="1">ATP synthase subunit delta</fullName>
    </recommendedName>
    <alternativeName>
        <fullName evidence="1">ATP synthase F(1) sector subunit delta</fullName>
    </alternativeName>
    <alternativeName>
        <fullName evidence="1">F-type ATPase subunit delta</fullName>
        <shortName evidence="1">F-ATPase subunit delta</shortName>
    </alternativeName>
</protein>
<feature type="chain" id="PRO_0000370989" description="ATP synthase subunit delta">
    <location>
        <begin position="1"/>
        <end position="185"/>
    </location>
</feature>
<dbReference type="EMBL" id="BA000045">
    <property type="protein sequence ID" value="BAC90847.1"/>
    <property type="molecule type" value="Genomic_DNA"/>
</dbReference>
<dbReference type="RefSeq" id="NP_925852.1">
    <property type="nucleotide sequence ID" value="NC_005125.1"/>
</dbReference>
<dbReference type="RefSeq" id="WP_011142900.1">
    <property type="nucleotide sequence ID" value="NC_005125.1"/>
</dbReference>
<dbReference type="SMR" id="Q7NCS2"/>
<dbReference type="STRING" id="251221.gene:10760410"/>
<dbReference type="EnsemblBacteria" id="BAC90847">
    <property type="protein sequence ID" value="BAC90847"/>
    <property type="gene ID" value="BAC90847"/>
</dbReference>
<dbReference type="KEGG" id="gvi:gll2906"/>
<dbReference type="PATRIC" id="fig|251221.4.peg.2936"/>
<dbReference type="eggNOG" id="COG0712">
    <property type="taxonomic scope" value="Bacteria"/>
</dbReference>
<dbReference type="HOGENOM" id="CLU_085114_4_0_3"/>
<dbReference type="InParanoid" id="Q7NCS2"/>
<dbReference type="OrthoDB" id="9802471at2"/>
<dbReference type="PhylomeDB" id="Q7NCS2"/>
<dbReference type="Proteomes" id="UP000000557">
    <property type="component" value="Chromosome"/>
</dbReference>
<dbReference type="GO" id="GO:0005886">
    <property type="term" value="C:plasma membrane"/>
    <property type="evidence" value="ECO:0007669"/>
    <property type="project" value="UniProtKB-SubCell"/>
</dbReference>
<dbReference type="GO" id="GO:0045259">
    <property type="term" value="C:proton-transporting ATP synthase complex"/>
    <property type="evidence" value="ECO:0007669"/>
    <property type="project" value="UniProtKB-KW"/>
</dbReference>
<dbReference type="GO" id="GO:0046933">
    <property type="term" value="F:proton-transporting ATP synthase activity, rotational mechanism"/>
    <property type="evidence" value="ECO:0007669"/>
    <property type="project" value="UniProtKB-UniRule"/>
</dbReference>
<dbReference type="GO" id="GO:0015986">
    <property type="term" value="P:proton motive force-driven ATP synthesis"/>
    <property type="evidence" value="ECO:0000318"/>
    <property type="project" value="GO_Central"/>
</dbReference>
<dbReference type="Gene3D" id="1.10.520.20">
    <property type="entry name" value="N-terminal domain of the delta subunit of the F1F0-ATP synthase"/>
    <property type="match status" value="1"/>
</dbReference>
<dbReference type="HAMAP" id="MF_01416">
    <property type="entry name" value="ATP_synth_delta_bact"/>
    <property type="match status" value="1"/>
</dbReference>
<dbReference type="InterPro" id="IPR026015">
    <property type="entry name" value="ATP_synth_OSCP/delta_N_sf"/>
</dbReference>
<dbReference type="InterPro" id="IPR020781">
    <property type="entry name" value="ATPase_OSCP/d_CS"/>
</dbReference>
<dbReference type="InterPro" id="IPR000711">
    <property type="entry name" value="ATPase_OSCP/dsu"/>
</dbReference>
<dbReference type="NCBIfam" id="TIGR01145">
    <property type="entry name" value="ATP_synt_delta"/>
    <property type="match status" value="1"/>
</dbReference>
<dbReference type="PANTHER" id="PTHR11910">
    <property type="entry name" value="ATP SYNTHASE DELTA CHAIN"/>
    <property type="match status" value="1"/>
</dbReference>
<dbReference type="Pfam" id="PF00213">
    <property type="entry name" value="OSCP"/>
    <property type="match status" value="1"/>
</dbReference>
<dbReference type="PRINTS" id="PR00125">
    <property type="entry name" value="ATPASEDELTA"/>
</dbReference>
<dbReference type="SUPFAM" id="SSF47928">
    <property type="entry name" value="N-terminal domain of the delta subunit of the F1F0-ATP synthase"/>
    <property type="match status" value="1"/>
</dbReference>
<dbReference type="PROSITE" id="PS00389">
    <property type="entry name" value="ATPASE_DELTA"/>
    <property type="match status" value="1"/>
</dbReference>